<name>DEF1_RICCN</name>
<sequence>MSILPIVTAPDERLKQKSQPVLEFTDQTRKFMDDMLKTMYHEDGAGLAAVQVGVLKRILVIDIQDHDSVARPKDFYPLFIVNPEIIEKAEELVTANEGCISLPEQRIEVARPESIKIRYLDYHGKSRELKANDWLARVIQHEYDHLEGKLMIDYLSNLKRDVVLRKLKKLKNNIV</sequence>
<feature type="chain" id="PRO_0000082829" description="Peptide deformylase 1">
    <location>
        <begin position="1"/>
        <end position="175"/>
    </location>
</feature>
<feature type="active site" evidence="1">
    <location>
        <position position="142"/>
    </location>
</feature>
<feature type="binding site" evidence="1">
    <location>
        <position position="99"/>
    </location>
    <ligand>
        <name>Fe cation</name>
        <dbReference type="ChEBI" id="CHEBI:24875"/>
    </ligand>
</feature>
<feature type="binding site" evidence="1">
    <location>
        <position position="141"/>
    </location>
    <ligand>
        <name>Fe cation</name>
        <dbReference type="ChEBI" id="CHEBI:24875"/>
    </ligand>
</feature>
<feature type="binding site" evidence="1">
    <location>
        <position position="145"/>
    </location>
    <ligand>
        <name>Fe cation</name>
        <dbReference type="ChEBI" id="CHEBI:24875"/>
    </ligand>
</feature>
<dbReference type="EC" id="3.5.1.88" evidence="1"/>
<dbReference type="EMBL" id="AE006914">
    <property type="protein sequence ID" value="AAL02816.1"/>
    <property type="molecule type" value="Genomic_DNA"/>
</dbReference>
<dbReference type="PIR" id="F97734">
    <property type="entry name" value="F97734"/>
</dbReference>
<dbReference type="SMR" id="Q92IZ1"/>
<dbReference type="GeneID" id="927899"/>
<dbReference type="KEGG" id="rco:RC0278"/>
<dbReference type="PATRIC" id="fig|272944.4.peg.318"/>
<dbReference type="HOGENOM" id="CLU_061901_2_2_5"/>
<dbReference type="Proteomes" id="UP000000816">
    <property type="component" value="Chromosome"/>
</dbReference>
<dbReference type="GO" id="GO:0046872">
    <property type="term" value="F:metal ion binding"/>
    <property type="evidence" value="ECO:0007669"/>
    <property type="project" value="UniProtKB-KW"/>
</dbReference>
<dbReference type="GO" id="GO:0042586">
    <property type="term" value="F:peptide deformylase activity"/>
    <property type="evidence" value="ECO:0007669"/>
    <property type="project" value="UniProtKB-UniRule"/>
</dbReference>
<dbReference type="GO" id="GO:0006412">
    <property type="term" value="P:translation"/>
    <property type="evidence" value="ECO:0007669"/>
    <property type="project" value="UniProtKB-UniRule"/>
</dbReference>
<dbReference type="CDD" id="cd00487">
    <property type="entry name" value="Pep_deformylase"/>
    <property type="match status" value="1"/>
</dbReference>
<dbReference type="FunFam" id="3.90.45.10:FF:000005">
    <property type="entry name" value="Peptide deformylase"/>
    <property type="match status" value="1"/>
</dbReference>
<dbReference type="Gene3D" id="3.90.45.10">
    <property type="entry name" value="Peptide deformylase"/>
    <property type="match status" value="1"/>
</dbReference>
<dbReference type="HAMAP" id="MF_00163">
    <property type="entry name" value="Pep_deformylase"/>
    <property type="match status" value="1"/>
</dbReference>
<dbReference type="InterPro" id="IPR023635">
    <property type="entry name" value="Peptide_deformylase"/>
</dbReference>
<dbReference type="InterPro" id="IPR036821">
    <property type="entry name" value="Peptide_deformylase_sf"/>
</dbReference>
<dbReference type="NCBIfam" id="TIGR00079">
    <property type="entry name" value="pept_deformyl"/>
    <property type="match status" value="1"/>
</dbReference>
<dbReference type="NCBIfam" id="NF001159">
    <property type="entry name" value="PRK00150.1-3"/>
    <property type="match status" value="1"/>
</dbReference>
<dbReference type="PANTHER" id="PTHR10458">
    <property type="entry name" value="PEPTIDE DEFORMYLASE"/>
    <property type="match status" value="1"/>
</dbReference>
<dbReference type="PANTHER" id="PTHR10458:SF22">
    <property type="entry name" value="PEPTIDE DEFORMYLASE"/>
    <property type="match status" value="1"/>
</dbReference>
<dbReference type="Pfam" id="PF01327">
    <property type="entry name" value="Pep_deformylase"/>
    <property type="match status" value="1"/>
</dbReference>
<dbReference type="PIRSF" id="PIRSF004749">
    <property type="entry name" value="Pep_def"/>
    <property type="match status" value="1"/>
</dbReference>
<dbReference type="PRINTS" id="PR01576">
    <property type="entry name" value="PDEFORMYLASE"/>
</dbReference>
<dbReference type="SUPFAM" id="SSF56420">
    <property type="entry name" value="Peptide deformylase"/>
    <property type="match status" value="1"/>
</dbReference>
<proteinExistence type="inferred from homology"/>
<gene>
    <name evidence="1" type="primary">def1</name>
    <name type="ordered locus">RC0278</name>
</gene>
<protein>
    <recommendedName>
        <fullName evidence="1">Peptide deformylase 1</fullName>
        <shortName evidence="1">PDF 1</shortName>
        <ecNumber evidence="1">3.5.1.88</ecNumber>
    </recommendedName>
    <alternativeName>
        <fullName evidence="1">Polypeptide deformylase 1</fullName>
    </alternativeName>
</protein>
<reference key="1">
    <citation type="journal article" date="2001" name="Science">
        <title>Mechanisms of evolution in Rickettsia conorii and R. prowazekii.</title>
        <authorList>
            <person name="Ogata H."/>
            <person name="Audic S."/>
            <person name="Renesto-Audiffren P."/>
            <person name="Fournier P.-E."/>
            <person name="Barbe V."/>
            <person name="Samson D."/>
            <person name="Roux V."/>
            <person name="Cossart P."/>
            <person name="Weissenbach J."/>
            <person name="Claverie J.-M."/>
            <person name="Raoult D."/>
        </authorList>
    </citation>
    <scope>NUCLEOTIDE SEQUENCE [LARGE SCALE GENOMIC DNA]</scope>
    <source>
        <strain>ATCC VR-613 / Malish 7</strain>
    </source>
</reference>
<organism>
    <name type="scientific">Rickettsia conorii (strain ATCC VR-613 / Malish 7)</name>
    <dbReference type="NCBI Taxonomy" id="272944"/>
    <lineage>
        <taxon>Bacteria</taxon>
        <taxon>Pseudomonadati</taxon>
        <taxon>Pseudomonadota</taxon>
        <taxon>Alphaproteobacteria</taxon>
        <taxon>Rickettsiales</taxon>
        <taxon>Rickettsiaceae</taxon>
        <taxon>Rickettsieae</taxon>
        <taxon>Rickettsia</taxon>
        <taxon>spotted fever group</taxon>
    </lineage>
</organism>
<accession>Q92IZ1</accession>
<keyword id="KW-0378">Hydrolase</keyword>
<keyword id="KW-0408">Iron</keyword>
<keyword id="KW-0479">Metal-binding</keyword>
<keyword id="KW-0648">Protein biosynthesis</keyword>
<comment type="function">
    <text evidence="1">Removes the formyl group from the N-terminal Met of newly synthesized proteins. Requires at least a dipeptide for an efficient rate of reaction. N-terminal L-methionine is a prerequisite for activity but the enzyme has broad specificity at other positions.</text>
</comment>
<comment type="catalytic activity">
    <reaction evidence="1">
        <text>N-terminal N-formyl-L-methionyl-[peptide] + H2O = N-terminal L-methionyl-[peptide] + formate</text>
        <dbReference type="Rhea" id="RHEA:24420"/>
        <dbReference type="Rhea" id="RHEA-COMP:10639"/>
        <dbReference type="Rhea" id="RHEA-COMP:10640"/>
        <dbReference type="ChEBI" id="CHEBI:15377"/>
        <dbReference type="ChEBI" id="CHEBI:15740"/>
        <dbReference type="ChEBI" id="CHEBI:49298"/>
        <dbReference type="ChEBI" id="CHEBI:64731"/>
        <dbReference type="EC" id="3.5.1.88"/>
    </reaction>
</comment>
<comment type="cofactor">
    <cofactor evidence="1">
        <name>Fe(2+)</name>
        <dbReference type="ChEBI" id="CHEBI:29033"/>
    </cofactor>
    <text evidence="1">Binds 1 Fe(2+) ion.</text>
</comment>
<comment type="similarity">
    <text evidence="1">Belongs to the polypeptide deformylase family.</text>
</comment>
<evidence type="ECO:0000255" key="1">
    <source>
        <dbReference type="HAMAP-Rule" id="MF_00163"/>
    </source>
</evidence>